<proteinExistence type="inferred from homology"/>
<comment type="function">
    <text evidence="1">Two distinct, membrane-bound, FAD-containing enzymes are responsible for the catalysis of fumarate and succinate interconversion; fumarate reductase is used in anaerobic growth, and succinate dehydrogenase is used in aerobic growth. Anchors the catalytic components of the fumarate reductase complex to the cell inner membrane, binds quinones.</text>
</comment>
<comment type="subunit">
    <text evidence="1">Part of an enzyme complex containing four subunits: a flavoprotein (FrdA), an iron-sulfur protein (FrdB), and two hydrophobic anchor proteins (FrdC and FrdD).</text>
</comment>
<comment type="subcellular location">
    <subcellularLocation>
        <location evidence="1">Cell inner membrane</location>
        <topology evidence="1">Multi-pass membrane protein</topology>
    </subcellularLocation>
</comment>
<comment type="similarity">
    <text evidence="1">Belongs to the FrdC family.</text>
</comment>
<feature type="chain" id="PRO_1000062065" description="Fumarate reductase subunit C">
    <location>
        <begin position="1"/>
        <end position="131"/>
    </location>
</feature>
<feature type="transmembrane region" description="Helical" evidence="1">
    <location>
        <begin position="60"/>
        <end position="80"/>
    </location>
</feature>
<feature type="transmembrane region" description="Helical" evidence="1">
    <location>
        <begin position="110"/>
        <end position="130"/>
    </location>
</feature>
<sequence>MTTKRKAYVRPMPSTWWKKLPFYRFYMLREGTAVPAVWFSLELMYGVFALKHGPETWADFVGFLQNPVVLILNLIVLAAALLHTKTWFELAPKAANIIVKGEKMGPEPVIKGLWAVTAVVTAVVLFVALFW</sequence>
<evidence type="ECO:0000255" key="1">
    <source>
        <dbReference type="HAMAP-Rule" id="MF_00708"/>
    </source>
</evidence>
<reference key="1">
    <citation type="journal article" date="2010" name="PLoS Genet.">
        <title>Genome sequence of the plant growth promoting endophytic bacterium Enterobacter sp. 638.</title>
        <authorList>
            <person name="Taghavi S."/>
            <person name="van der Lelie D."/>
            <person name="Hoffman A."/>
            <person name="Zhang Y.B."/>
            <person name="Walla M.D."/>
            <person name="Vangronsveld J."/>
            <person name="Newman L."/>
            <person name="Monchy S."/>
        </authorList>
    </citation>
    <scope>NUCLEOTIDE SEQUENCE [LARGE SCALE GENOMIC DNA]</scope>
    <source>
        <strain>638</strain>
    </source>
</reference>
<dbReference type="EMBL" id="CP000653">
    <property type="protein sequence ID" value="ABP59029.1"/>
    <property type="molecule type" value="Genomic_DNA"/>
</dbReference>
<dbReference type="RefSeq" id="WP_011915602.1">
    <property type="nucleotide sequence ID" value="NC_009436.1"/>
</dbReference>
<dbReference type="SMR" id="A4W5P9"/>
<dbReference type="STRING" id="399742.Ent638_0341"/>
<dbReference type="KEGG" id="ent:Ent638_0341"/>
<dbReference type="eggNOG" id="COG3029">
    <property type="taxonomic scope" value="Bacteria"/>
</dbReference>
<dbReference type="HOGENOM" id="CLU_156492_0_0_6"/>
<dbReference type="OrthoDB" id="8909678at2"/>
<dbReference type="Proteomes" id="UP000000230">
    <property type="component" value="Chromosome"/>
</dbReference>
<dbReference type="GO" id="GO:0045283">
    <property type="term" value="C:fumarate reductase complex"/>
    <property type="evidence" value="ECO:0007669"/>
    <property type="project" value="UniProtKB-UniRule"/>
</dbReference>
<dbReference type="GO" id="GO:0005886">
    <property type="term" value="C:plasma membrane"/>
    <property type="evidence" value="ECO:0007669"/>
    <property type="project" value="UniProtKB-SubCell"/>
</dbReference>
<dbReference type="GO" id="GO:0000104">
    <property type="term" value="F:succinate dehydrogenase activity"/>
    <property type="evidence" value="ECO:0007669"/>
    <property type="project" value="UniProtKB-UniRule"/>
</dbReference>
<dbReference type="CDD" id="cd00546">
    <property type="entry name" value="QFR_TypeD_subunitC"/>
    <property type="match status" value="1"/>
</dbReference>
<dbReference type="Gene3D" id="1.20.1300.10">
    <property type="entry name" value="Fumarate reductase/succinate dehydrogenase, transmembrane subunit"/>
    <property type="match status" value="1"/>
</dbReference>
<dbReference type="HAMAP" id="MF_00708">
    <property type="entry name" value="Fumarate_red_C"/>
    <property type="match status" value="1"/>
</dbReference>
<dbReference type="InterPro" id="IPR003510">
    <property type="entry name" value="Fumarate_red_C"/>
</dbReference>
<dbReference type="InterPro" id="IPR034804">
    <property type="entry name" value="SQR/QFR_C/D"/>
</dbReference>
<dbReference type="NCBIfam" id="NF003445">
    <property type="entry name" value="PRK04987.1"/>
    <property type="match status" value="1"/>
</dbReference>
<dbReference type="Pfam" id="PF02300">
    <property type="entry name" value="Fumarate_red_C"/>
    <property type="match status" value="1"/>
</dbReference>
<dbReference type="PIRSF" id="PIRSF000180">
    <property type="entry name" value="FrdC"/>
    <property type="match status" value="1"/>
</dbReference>
<dbReference type="SUPFAM" id="SSF81343">
    <property type="entry name" value="Fumarate reductase respiratory complex transmembrane subunits"/>
    <property type="match status" value="1"/>
</dbReference>
<keyword id="KW-0997">Cell inner membrane</keyword>
<keyword id="KW-1003">Cell membrane</keyword>
<keyword id="KW-0472">Membrane</keyword>
<keyword id="KW-0812">Transmembrane</keyword>
<keyword id="KW-1133">Transmembrane helix</keyword>
<organism>
    <name type="scientific">Enterobacter sp. (strain 638)</name>
    <dbReference type="NCBI Taxonomy" id="399742"/>
    <lineage>
        <taxon>Bacteria</taxon>
        <taxon>Pseudomonadati</taxon>
        <taxon>Pseudomonadota</taxon>
        <taxon>Gammaproteobacteria</taxon>
        <taxon>Enterobacterales</taxon>
        <taxon>Enterobacteriaceae</taxon>
        <taxon>Enterobacter</taxon>
    </lineage>
</organism>
<gene>
    <name evidence="1" type="primary">frdC</name>
    <name type="ordered locus">Ent638_0341</name>
</gene>
<name>FRDC_ENT38</name>
<protein>
    <recommendedName>
        <fullName evidence="1">Fumarate reductase subunit C</fullName>
    </recommendedName>
    <alternativeName>
        <fullName evidence="1">Fumarate reductase 15 kDa hydrophobic protein</fullName>
    </alternativeName>
    <alternativeName>
        <fullName evidence="1">Quinol-fumarate reductase subunit C</fullName>
        <shortName evidence="1">QFR subunit C</shortName>
    </alternativeName>
</protein>
<accession>A4W5P9</accession>